<keyword id="KW-0002">3D-structure</keyword>
<keyword id="KW-0106">Calcium</keyword>
<keyword id="KW-1003">Cell membrane</keyword>
<keyword id="KW-1015">Disulfide bond</keyword>
<keyword id="KW-0325">Glycoprotein</keyword>
<keyword id="KW-0407">Ion channel</keyword>
<keyword id="KW-0406">Ion transport</keyword>
<keyword id="KW-1071">Ligand-gated ion channel</keyword>
<keyword id="KW-0460">Magnesium</keyword>
<keyword id="KW-0472">Membrane</keyword>
<keyword id="KW-0479">Metal-binding</keyword>
<keyword id="KW-0628">Postsynaptic cell membrane</keyword>
<keyword id="KW-0675">Receptor</keyword>
<keyword id="KW-1185">Reference proteome</keyword>
<keyword id="KW-0732">Signal</keyword>
<keyword id="KW-0770">Synapse</keyword>
<keyword id="KW-0812">Transmembrane</keyword>
<keyword id="KW-1133">Transmembrane helix</keyword>
<keyword id="KW-0813">Transport</keyword>
<keyword id="KW-0862">Zinc</keyword>
<sequence length="1451" mass="164602">MGMFVLLLYTFLYAGDLGHGAEKSFPVLNIAVILGRTRYITERDIRSLWTRDMSLDFDVNVVTLLVNQTDPKSIITHVCDLMSGTKIHGVVFGDDTDQEAIAQILDFVSSQTFIPILGIHGGSSMIMADKDEMSTFFQFGASIKQQATVMLNIMEEYDWHVFSVITSNFPGYRDFISFIKTTVDNSFVGWEVQNYITLDTSYTDAQTLTQLKKIHSSVILLYCSKDEATYIFEEARSLGLMGYGFVWIVPSLVTGNTDIIPYEFPSGLVSVSYDDWDYGIEARVRDGLGIITTAASAMLEKHSVIPEAKTSCYGQNERNDPPLHTLHNFMINVTWDGKDLSFTEDGYQANPKLVVLLLNMEREWEKVGKWENKSLNMKYPVWPRITASLDSDHDDNHLSIVTLEEAPFVIVENIDYLTGTCVRNTVPCRKYFRLNNSTTEGTSVKKCCKGFCIDILKKLSKTVKFTYDLYLVTNGKHGKKIKNVWNGMIGEVVYKRAVMAVGSLTINEERSVAVDFSVPFVETGISVMVSRSNGTVSPSAFLEPFSASVWVMMFVMLLLVSAMAVFIFEYFSPVGYNRNLAQGKDPHGPSFTIGKAVWLLWGLVFNNSVPVQNPKGTTSKIIVSIWAFFAVIFLASYTANLAAFMIQEEFVDQVTGLSDNKFQRPHDYSPPFRFGTVPNGSTERNIRNNYPDMHQYMVKFHQKGVQDALVSLKTGKLDAFIYDAAVLNYMAGRDEGCKLVTIGSGYIFATTGYGIALQKGSRWKRPIDLALLQFVGDGEMEELEKLWLTGICHTEKNEVMSSQLDIDNMAGVFYMLAAAMALSLITFVWEHLFYWKLRFCFTGVCTGTPGLLFSISRGIYSCIHGVHIEEKKKSPDFSFTASQTNMLKLLRASKNIANLSNLNQSQCNSPKRTSDYIQRNSLLTDMVLDKGNLTYSDNRPFQQKDIYSENTYDLAMLSANCPKDNLNNYVFQGQHPLTLNESNPNTVEVAVSAEAKVNTRPRQLWKKSVETLRQTQGSVNENGTEESKSSIKNQRFLPEDGHFSDVSEASSRATCHIDSENNNKHRKSKDNLKKRPVSAKYARECSEVELSYLKIKHGPNRDKVYTIDGDKEPSFIMDQPKYSENSPDQDDEDYPDVYQDHNDNYRKTEPLQSDRTPLHSEGRLPNNDIQYKLFSKHYNLKEKNTSMSDANDRHRQNSTHCRSCLSNMPNYTGHYTARSPYKCDDCLHTGKLYDIDEDQMLHEAANSMHSEDFYEHNWLENNALHFQKKNKLRINRQHSCDNINKPREHDLGRPPRSLSLKEKERYIQENPFAKFVIVPPEKLLGNNASLFTDSLKDSKRSKSLYPDNSSDNPFLHSYQETQKLSHGRSSSDIYKQSSLPKARNDNYLRSSIKSTTSYSSRDGRVPDDMCVSEYALPYVTSNNSVYSAPRVVNSCSNRRVFKKMPSLESDV</sequence>
<reference evidence="14" key="1">
    <citation type="journal article" date="2008" name="J. Neurosci.">
        <title>Roles of NR2A and NR2B in the development of dendritic arbor morphology in vivo.</title>
        <authorList>
            <person name="Ewald R.C."/>
            <person name="Van Keuren-Jensen K.R."/>
            <person name="Aizenman C.D."/>
            <person name="Cline H.T."/>
        </authorList>
    </citation>
    <scope>NUCLEOTIDE SEQUENCE [MRNA]</scope>
    <scope>FUNCTION</scope>
</reference>
<reference evidence="13" key="2">
    <citation type="submission" date="2008-11" db="EMBL/GenBank/DDBJ databases">
        <authorList>
            <consortium name="NIH - Xenopus Gene Collection (XGC) project"/>
        </authorList>
    </citation>
    <scope>NUCLEOTIDE SEQUENCE [LARGE SCALE MRNA]</scope>
    <source>
        <tissue evidence="13">Oocyte</tissue>
    </source>
</reference>
<reference evidence="15 16" key="3">
    <citation type="journal article" date="2017" name="Science">
        <title>Cryo-EM structures of the triheteromeric NMDA receptor and its allosteric modulation.</title>
        <authorList>
            <person name="Lu W."/>
            <person name="Du J."/>
            <person name="Goehring A."/>
            <person name="Gouaux E."/>
        </authorList>
    </citation>
    <scope>STRUCTURE BY ELECTRON MICROSCOPY (4.50 ANGSTROMS) OF 1-834 IN COMPLEX WITH GLUTAMATE; GRIN1 AND GRIN2B</scope>
    <scope>FUNCTION</scope>
    <scope>TRANSPORTER ACTIVITY</scope>
    <scope>SUBCELLULAR LOCATION</scope>
    <scope>TOPOLOGY</scope>
    <scope>SUBUNIT</scope>
    <scope>DISULFIDE BONDS</scope>
</reference>
<dbReference type="EMBL" id="EU275164">
    <property type="protein sequence ID" value="ABX60543.1"/>
    <property type="molecule type" value="mRNA"/>
</dbReference>
<dbReference type="EMBL" id="BC170551">
    <property type="protein sequence ID" value="AAI70551.1"/>
    <property type="molecule type" value="mRNA"/>
</dbReference>
<dbReference type="EMBL" id="BC170552">
    <property type="protein sequence ID" value="AAI70552.1"/>
    <property type="molecule type" value="mRNA"/>
</dbReference>
<dbReference type="RefSeq" id="NP_001106367.1">
    <property type="nucleotide sequence ID" value="NM_001112896.1"/>
</dbReference>
<dbReference type="PDB" id="5UOW">
    <property type="method" value="EM"/>
    <property type="resolution" value="4.50 A"/>
    <property type="chains" value="B=1-834"/>
</dbReference>
<dbReference type="PDB" id="5UP2">
    <property type="method" value="EM"/>
    <property type="resolution" value="6.00 A"/>
    <property type="chains" value="B=1-834"/>
</dbReference>
<dbReference type="PDBsum" id="5UOW"/>
<dbReference type="PDBsum" id="5UP2"/>
<dbReference type="EMDB" id="EMD-8579"/>
<dbReference type="EMDB" id="EMD-8581"/>
<dbReference type="SMR" id="B7ZSK1"/>
<dbReference type="GlyCosmos" id="B7ZSK1">
    <property type="glycosylation" value="7 sites, No reported glycans"/>
</dbReference>
<dbReference type="GeneID" id="100127346"/>
<dbReference type="KEGG" id="xla:100127346"/>
<dbReference type="AGR" id="Xenbase:XB-GENE-1021446"/>
<dbReference type="CTD" id="100127346"/>
<dbReference type="Xenbase" id="XB-GENE-1021446">
    <property type="gene designation" value="grin2a.L"/>
</dbReference>
<dbReference type="OrthoDB" id="5984008at2759"/>
<dbReference type="Proteomes" id="UP000186698">
    <property type="component" value="Chromosome 9_10L"/>
</dbReference>
<dbReference type="Bgee" id="100127346">
    <property type="expression patterns" value="Expressed in brain and 1 other cell type or tissue"/>
</dbReference>
<dbReference type="GO" id="GO:0017146">
    <property type="term" value="C:NMDA selective glutamate receptor complex"/>
    <property type="evidence" value="ECO:0000314"/>
    <property type="project" value="UniProtKB"/>
</dbReference>
<dbReference type="GO" id="GO:0005886">
    <property type="term" value="C:plasma membrane"/>
    <property type="evidence" value="ECO:0000314"/>
    <property type="project" value="UniProtKB"/>
</dbReference>
<dbReference type="GO" id="GO:0098839">
    <property type="term" value="C:postsynaptic density membrane"/>
    <property type="evidence" value="ECO:0000318"/>
    <property type="project" value="GO_Central"/>
</dbReference>
<dbReference type="GO" id="GO:0045211">
    <property type="term" value="C:postsynaptic membrane"/>
    <property type="evidence" value="ECO:0000250"/>
    <property type="project" value="UniProtKB"/>
</dbReference>
<dbReference type="GO" id="GO:0022849">
    <property type="term" value="F:glutamate-gated calcium ion channel activity"/>
    <property type="evidence" value="ECO:0000250"/>
    <property type="project" value="UniProtKB"/>
</dbReference>
<dbReference type="GO" id="GO:0046872">
    <property type="term" value="F:metal ion binding"/>
    <property type="evidence" value="ECO:0007669"/>
    <property type="project" value="UniProtKB-KW"/>
</dbReference>
<dbReference type="GO" id="GO:0004972">
    <property type="term" value="F:NMDA glutamate receptor activity"/>
    <property type="evidence" value="ECO:0000314"/>
    <property type="project" value="UniProtKB"/>
</dbReference>
<dbReference type="GO" id="GO:1904315">
    <property type="term" value="F:transmitter-gated monoatomic ion channel activity involved in regulation of postsynaptic membrane potential"/>
    <property type="evidence" value="ECO:0000318"/>
    <property type="project" value="GO_Central"/>
</dbReference>
<dbReference type="GO" id="GO:0097553">
    <property type="term" value="P:calcium ion transmembrane import into cytosol"/>
    <property type="evidence" value="ECO:0000250"/>
    <property type="project" value="UniProtKB"/>
</dbReference>
<dbReference type="GO" id="GO:0060079">
    <property type="term" value="P:excitatory postsynaptic potential"/>
    <property type="evidence" value="ECO:0000318"/>
    <property type="project" value="GO_Central"/>
</dbReference>
<dbReference type="GO" id="GO:0060291">
    <property type="term" value="P:long-term synaptic potentiation"/>
    <property type="evidence" value="ECO:0000318"/>
    <property type="project" value="GO_Central"/>
</dbReference>
<dbReference type="GO" id="GO:0051290">
    <property type="term" value="P:protein heterotetramerization"/>
    <property type="evidence" value="ECO:0000314"/>
    <property type="project" value="UniProtKB"/>
</dbReference>
<dbReference type="GO" id="GO:0048167">
    <property type="term" value="P:regulation of synaptic plasticity"/>
    <property type="evidence" value="ECO:0000250"/>
    <property type="project" value="UniProtKB"/>
</dbReference>
<dbReference type="GO" id="GO:0010043">
    <property type="term" value="P:response to zinc ion"/>
    <property type="evidence" value="ECO:0000314"/>
    <property type="project" value="UniProtKB"/>
</dbReference>
<dbReference type="GO" id="GO:0035249">
    <property type="term" value="P:synaptic transmission, glutamatergic"/>
    <property type="evidence" value="ECO:0000318"/>
    <property type="project" value="GO_Central"/>
</dbReference>
<dbReference type="CDD" id="cd06378">
    <property type="entry name" value="PBP1_iGluR_NMDA_NR2"/>
    <property type="match status" value="1"/>
</dbReference>
<dbReference type="CDD" id="cd13718">
    <property type="entry name" value="PBP2_iGluR_NMDA_Nr2"/>
    <property type="match status" value="1"/>
</dbReference>
<dbReference type="FunFam" id="3.40.50.2300:FF:000312">
    <property type="entry name" value="Glutamate ionotropic receptor NMDA type subunit 2B"/>
    <property type="match status" value="1"/>
</dbReference>
<dbReference type="FunFam" id="3.40.50.2300:FF:000020">
    <property type="entry name" value="Glutamate receptor ionotropic, NMDA 2B, putative"/>
    <property type="match status" value="1"/>
</dbReference>
<dbReference type="FunFam" id="3.40.190.10:FF:000007">
    <property type="entry name" value="Putative glutamate receptor ionotropic NMDA 2B"/>
    <property type="match status" value="1"/>
</dbReference>
<dbReference type="FunFam" id="3.40.190.10:FF:000009">
    <property type="entry name" value="Putative glutamate receptor ionotropic NMDA 2B"/>
    <property type="match status" value="1"/>
</dbReference>
<dbReference type="Gene3D" id="3.40.50.2300">
    <property type="match status" value="2"/>
</dbReference>
<dbReference type="Gene3D" id="3.40.190.10">
    <property type="entry name" value="Periplasmic binding protein-like II"/>
    <property type="match status" value="2"/>
</dbReference>
<dbReference type="InterPro" id="IPR001828">
    <property type="entry name" value="ANF_lig-bd_rcpt"/>
</dbReference>
<dbReference type="InterPro" id="IPR019594">
    <property type="entry name" value="Glu/Gly-bd"/>
</dbReference>
<dbReference type="InterPro" id="IPR001508">
    <property type="entry name" value="Iono_Glu_rcpt_met"/>
</dbReference>
<dbReference type="InterPro" id="IPR015683">
    <property type="entry name" value="Ionotropic_Glu_rcpt"/>
</dbReference>
<dbReference type="InterPro" id="IPR001320">
    <property type="entry name" value="Iontro_rcpt_C"/>
</dbReference>
<dbReference type="InterPro" id="IPR018884">
    <property type="entry name" value="NMDAR2_C"/>
</dbReference>
<dbReference type="InterPro" id="IPR028082">
    <property type="entry name" value="Peripla_BP_I"/>
</dbReference>
<dbReference type="PANTHER" id="PTHR18966">
    <property type="entry name" value="IONOTROPIC GLUTAMATE RECEPTOR"/>
    <property type="match status" value="1"/>
</dbReference>
<dbReference type="Pfam" id="PF01094">
    <property type="entry name" value="ANF_receptor"/>
    <property type="match status" value="1"/>
</dbReference>
<dbReference type="Pfam" id="PF00060">
    <property type="entry name" value="Lig_chan"/>
    <property type="match status" value="1"/>
</dbReference>
<dbReference type="Pfam" id="PF10613">
    <property type="entry name" value="Lig_chan-Glu_bd"/>
    <property type="match status" value="1"/>
</dbReference>
<dbReference type="Pfam" id="PF10565">
    <property type="entry name" value="NMDAR2_C"/>
    <property type="match status" value="1"/>
</dbReference>
<dbReference type="PRINTS" id="PR00177">
    <property type="entry name" value="NMDARECEPTOR"/>
</dbReference>
<dbReference type="SMART" id="SM00918">
    <property type="entry name" value="Lig_chan-Glu_bd"/>
    <property type="match status" value="1"/>
</dbReference>
<dbReference type="SMART" id="SM00079">
    <property type="entry name" value="PBPe"/>
    <property type="match status" value="1"/>
</dbReference>
<dbReference type="SUPFAM" id="SSF53822">
    <property type="entry name" value="Periplasmic binding protein-like I"/>
    <property type="match status" value="1"/>
</dbReference>
<dbReference type="SUPFAM" id="SSF53850">
    <property type="entry name" value="Periplasmic binding protein-like II"/>
    <property type="match status" value="1"/>
</dbReference>
<gene>
    <name evidence="4" type="primary">grin2a</name>
</gene>
<feature type="signal peptide" evidence="5">
    <location>
        <begin position="1"/>
        <end position="20"/>
    </location>
</feature>
<feature type="chain" id="PRO_5002864231" description="Glutamate receptor ionotropic, NMDA 2A">
    <location>
        <begin position="21"/>
        <end position="1451"/>
    </location>
</feature>
<feature type="topological domain" description="Extracellular" evidence="9">
    <location>
        <begin position="21"/>
        <end position="547"/>
    </location>
</feature>
<feature type="transmembrane region" description="Helical" evidence="9">
    <location>
        <begin position="548"/>
        <end position="568"/>
    </location>
</feature>
<feature type="topological domain" description="Cytoplasmic" evidence="9">
    <location>
        <begin position="569"/>
        <end position="592"/>
    </location>
</feature>
<feature type="intramembrane region" description="Discontinuously helical" evidence="9">
    <location>
        <begin position="593"/>
        <end position="612"/>
    </location>
</feature>
<feature type="topological domain" description="Cytoplasmic" evidence="9">
    <location>
        <begin position="613"/>
        <end position="617"/>
    </location>
</feature>
<feature type="transmembrane region" description="Helical" evidence="9">
    <location>
        <begin position="618"/>
        <end position="637"/>
    </location>
</feature>
<feature type="topological domain" description="Extracellular" evidence="9">
    <location>
        <begin position="638"/>
        <end position="808"/>
    </location>
</feature>
<feature type="transmembrane region" description="Helical" evidence="9">
    <location>
        <begin position="809"/>
        <end position="829"/>
    </location>
</feature>
<feature type="topological domain" description="Cytoplasmic" evidence="9">
    <location>
        <begin position="830"/>
        <end position="1451"/>
    </location>
</feature>
<feature type="region of interest" description="Pore-forming" evidence="11">
    <location>
        <begin position="591"/>
        <end position="612"/>
    </location>
</feature>
<feature type="region of interest" description="Disordered" evidence="7">
    <location>
        <begin position="1011"/>
        <end position="1080"/>
    </location>
</feature>
<feature type="region of interest" description="Disordered" evidence="7">
    <location>
        <begin position="1100"/>
        <end position="1165"/>
    </location>
</feature>
<feature type="compositionally biased region" description="Polar residues" evidence="7">
    <location>
        <begin position="1011"/>
        <end position="1022"/>
    </location>
</feature>
<feature type="compositionally biased region" description="Basic and acidic residues" evidence="7">
    <location>
        <begin position="1055"/>
        <end position="1073"/>
    </location>
</feature>
<feature type="compositionally biased region" description="Basic and acidic residues" evidence="7">
    <location>
        <begin position="1100"/>
        <end position="1113"/>
    </location>
</feature>
<feature type="compositionally biased region" description="Basic and acidic residues" evidence="7">
    <location>
        <begin position="1138"/>
        <end position="1149"/>
    </location>
</feature>
<feature type="binding site" evidence="3">
    <location>
        <position position="120"/>
    </location>
    <ligand>
        <name>Zn(2+)</name>
        <dbReference type="ChEBI" id="CHEBI:29105"/>
        <label>1</label>
        <note>inhibitor</note>
    </ligand>
</feature>
<feature type="binding site" evidence="3">
    <location>
        <position position="258"/>
    </location>
    <ligand>
        <name>Zn(2+)</name>
        <dbReference type="ChEBI" id="CHEBI:29105"/>
        <label>1</label>
        <note>inhibitor</note>
    </ligand>
</feature>
<feature type="binding site" evidence="3">
    <location>
        <position position="274"/>
    </location>
    <ligand>
        <name>Zn(2+)</name>
        <dbReference type="ChEBI" id="CHEBI:29105"/>
        <label>1</label>
        <note>inhibitor</note>
    </ligand>
</feature>
<feature type="binding site" evidence="3">
    <location>
        <position position="503"/>
    </location>
    <ligand>
        <name>L-glutamate</name>
        <dbReference type="ChEBI" id="CHEBI:29985"/>
    </ligand>
</feature>
<feature type="binding site" evidence="3">
    <location>
        <position position="505"/>
    </location>
    <ligand>
        <name>L-glutamate</name>
        <dbReference type="ChEBI" id="CHEBI:29985"/>
    </ligand>
</feature>
<feature type="binding site" evidence="3">
    <location>
        <position position="510"/>
    </location>
    <ligand>
        <name>L-glutamate</name>
        <dbReference type="ChEBI" id="CHEBI:29985"/>
    </ligand>
</feature>
<feature type="binding site" evidence="3">
    <location>
        <position position="681"/>
    </location>
    <ligand>
        <name>L-glutamate</name>
        <dbReference type="ChEBI" id="CHEBI:29985"/>
    </ligand>
</feature>
<feature type="binding site" evidence="3">
    <location>
        <position position="682"/>
    </location>
    <ligand>
        <name>L-glutamate</name>
        <dbReference type="ChEBI" id="CHEBI:29985"/>
    </ligand>
</feature>
<feature type="binding site" evidence="3">
    <location>
        <position position="723"/>
    </location>
    <ligand>
        <name>L-glutamate</name>
        <dbReference type="ChEBI" id="CHEBI:29985"/>
    </ligand>
</feature>
<feature type="glycosylation site" description="N-linked (GlcNAc...) asparagine" evidence="6">
    <location>
        <position position="67"/>
    </location>
</feature>
<feature type="glycosylation site" description="N-linked (GlcNAc...) asparagine" evidence="6">
    <location>
        <position position="332"/>
    </location>
</feature>
<feature type="glycosylation site" description="N-linked (GlcNAc...) asparagine" evidence="6">
    <location>
        <position position="372"/>
    </location>
</feature>
<feature type="glycosylation site" description="N-linked (GlcNAc...) asparagine" evidence="6">
    <location>
        <position position="435"/>
    </location>
</feature>
<feature type="glycosylation site" description="N-linked (GlcNAc...) asparagine" evidence="6">
    <location>
        <position position="436"/>
    </location>
</feature>
<feature type="glycosylation site" description="N-linked (GlcNAc...) asparagine" evidence="6">
    <location>
        <position position="533"/>
    </location>
</feature>
<feature type="glycosylation site" description="N-linked (GlcNAc...) asparagine" evidence="6">
    <location>
        <position position="679"/>
    </location>
</feature>
<feature type="disulfide bond" evidence="9 15 16">
    <location>
        <begin position="79"/>
        <end position="312"/>
    </location>
</feature>
<feature type="disulfide bond" evidence="9 15 16">
    <location>
        <begin position="421"/>
        <end position="447"/>
    </location>
</feature>
<feature type="disulfide bond" evidence="9 15 16">
    <location>
        <begin position="428"/>
        <end position="448"/>
    </location>
</feature>
<feature type="disulfide bond" evidence="9 15 16">
    <location>
        <begin position="737"/>
        <end position="792"/>
    </location>
</feature>
<feature type="sequence conflict" description="In Ref. 1; ABX60543." evidence="11" ref="1">
    <original>I</original>
    <variation>M</variation>
    <location>
        <position position="259"/>
    </location>
</feature>
<feature type="sequence conflict" description="In Ref. 1; ABX60543." evidence="11" ref="1">
    <original>G</original>
    <variation>V</variation>
    <location>
        <position position="760"/>
    </location>
</feature>
<feature type="sequence conflict" description="In Ref. 1; ABX60543." evidence="11" ref="1">
    <original>N</original>
    <variation>S</variation>
    <location>
        <position position="965"/>
    </location>
</feature>
<feature type="sequence conflict" description="In Ref. 2; AAI70552." evidence="11" ref="2">
    <original>I</original>
    <variation>T</variation>
    <location>
        <position position="1031"/>
    </location>
</feature>
<feature type="sequence conflict" description="In Ref. 1; ABX60543." evidence="11" ref="1">
    <original>V</original>
    <variation>G</variation>
    <location>
        <position position="1431"/>
    </location>
</feature>
<feature type="sequence conflict" description="In Ref. 2; AAI70552." evidence="11" ref="2">
    <original>V</original>
    <variation>G</variation>
    <location>
        <position position="1432"/>
    </location>
</feature>
<protein>
    <recommendedName>
        <fullName evidence="4">Glutamate receptor ionotropic, NMDA 2A</fullName>
        <shortName>GluN2A</shortName>
    </recommendedName>
    <alternativeName>
        <fullName>N-methyl D-aspartate receptor subtype 2A</fullName>
        <shortName>NMDAR2A</shortName>
        <shortName evidence="10">NR2A</shortName>
    </alternativeName>
</protein>
<proteinExistence type="evidence at protein level"/>
<organism evidence="13">
    <name type="scientific">Xenopus laevis</name>
    <name type="common">African clawed frog</name>
    <dbReference type="NCBI Taxonomy" id="8355"/>
    <lineage>
        <taxon>Eukaryota</taxon>
        <taxon>Metazoa</taxon>
        <taxon>Chordata</taxon>
        <taxon>Craniata</taxon>
        <taxon>Vertebrata</taxon>
        <taxon>Euteleostomi</taxon>
        <taxon>Amphibia</taxon>
        <taxon>Batrachia</taxon>
        <taxon>Anura</taxon>
        <taxon>Pipoidea</taxon>
        <taxon>Pipidae</taxon>
        <taxon>Xenopodinae</taxon>
        <taxon>Xenopus</taxon>
        <taxon>Xenopus</taxon>
    </lineage>
</organism>
<comment type="function">
    <text evidence="1 2 4 8 9">Component of N-methyl-D-aspartate (NMDA) receptors (NMDARs) that function as heterotetrameric, ligand-gated cation channels with high calcium permeability and voltage-dependent block by Mg(2+) (PubMed:28232581). MDARs participate in synaptic plasticity (By similarity). Channel activation requires binding of the neurotransmitter L-glutamate to the GluN2 subunit, glycine binding to the GluN1 subunit, plus membrane depolarization to eliminate channel inhibition by Mg(2+) (PubMed:28232581). NMDARs mediate simultaneously the potasium efflux and the influx of calcium and sodium (By similarity). Each GluN2 subunit confers differential attributes to channel properties, including activation, deactivation and desensitization kinetics, pH sensitivity, Ca2(+) permeability, and binding to allosteric modulators (By similarity). Plays a role in dendritic branching in brain neurons and in synaptic plasticity (PubMed:18216193).</text>
</comment>
<comment type="catalytic activity">
    <reaction evidence="9">
        <text>Ca(2+)(in) = Ca(2+)(out)</text>
        <dbReference type="Rhea" id="RHEA:29671"/>
        <dbReference type="ChEBI" id="CHEBI:29108"/>
    </reaction>
</comment>
<comment type="catalytic activity">
    <reaction evidence="4">
        <text>Na(+)(in) = Na(+)(out)</text>
        <dbReference type="Rhea" id="RHEA:34963"/>
        <dbReference type="ChEBI" id="CHEBI:29101"/>
    </reaction>
</comment>
<comment type="catalytic activity">
    <reaction evidence="2">
        <text>K(+)(in) = K(+)(out)</text>
        <dbReference type="Rhea" id="RHEA:29463"/>
        <dbReference type="ChEBI" id="CHEBI:29103"/>
    </reaction>
</comment>
<comment type="subunit">
    <text evidence="9 11">Heterotetramer. Forms heterotetrameric channels composed of two GluN1/zeta subunits (GRIN1), and two identical GluN2/epsilon subunits (GRIN2A, GRIN2B, GRIN2C or GRIN2D) or GluN3 subunits (GRIN3A or GRIN3B) (in vitro) (PubMed:28232581). In vivo, the subunit composition may depend on the expression levels of the different subunits (Probable).</text>
</comment>
<comment type="subcellular location">
    <subcellularLocation>
        <location evidence="9">Cell membrane</location>
        <topology evidence="9">Multi-pass membrane protein</topology>
    </subcellularLocation>
    <subcellularLocation>
        <location evidence="3">Postsynaptic cell membrane</location>
        <topology evidence="9">Multi-pass membrane protein</topology>
    </subcellularLocation>
</comment>
<comment type="domain">
    <text evidence="12">Contains an N-terminal domain, a ligand-binding domain and a transmembrane domain. Agonist binding to the extracellular ligand-binding domains triggers channel gating.</text>
</comment>
<comment type="domain">
    <text evidence="12">A hydrophobic region that gives rise to the prediction of a transmembrane span does not cross the membrane, but is part of a discontinuously helical region that dips into the membrane and is probably part of the pore and of the selectivity filter.</text>
</comment>
<comment type="similarity">
    <text evidence="5">Belongs to the glutamate-gated ion channel (TC 1.A.10.1) family.</text>
</comment>
<name>NMDE1_XENLA</name>
<evidence type="ECO:0000250" key="1">
    <source>
        <dbReference type="UniProtKB" id="P35436"/>
    </source>
</evidence>
<evidence type="ECO:0000250" key="2">
    <source>
        <dbReference type="UniProtKB" id="P35438"/>
    </source>
</evidence>
<evidence type="ECO:0000250" key="3">
    <source>
        <dbReference type="UniProtKB" id="Q00959"/>
    </source>
</evidence>
<evidence type="ECO:0000250" key="4">
    <source>
        <dbReference type="UniProtKB" id="Q12879"/>
    </source>
</evidence>
<evidence type="ECO:0000255" key="5"/>
<evidence type="ECO:0000255" key="6">
    <source>
        <dbReference type="PROSITE-ProRule" id="PRU00498"/>
    </source>
</evidence>
<evidence type="ECO:0000256" key="7">
    <source>
        <dbReference type="SAM" id="MobiDB-lite"/>
    </source>
</evidence>
<evidence type="ECO:0000269" key="8">
    <source>
    </source>
</evidence>
<evidence type="ECO:0000269" key="9">
    <source>
    </source>
</evidence>
<evidence type="ECO:0000303" key="10">
    <source>
    </source>
</evidence>
<evidence type="ECO:0000305" key="11"/>
<evidence type="ECO:0000305" key="12">
    <source>
    </source>
</evidence>
<evidence type="ECO:0000312" key="13">
    <source>
        <dbReference type="EMBL" id="AAI70551.1"/>
    </source>
</evidence>
<evidence type="ECO:0000312" key="14">
    <source>
        <dbReference type="EMBL" id="ABX60543.1"/>
    </source>
</evidence>
<evidence type="ECO:0007744" key="15">
    <source>
        <dbReference type="PDB" id="5UOW"/>
    </source>
</evidence>
<evidence type="ECO:0007744" key="16">
    <source>
        <dbReference type="PDB" id="5UP2"/>
    </source>
</evidence>
<accession>B7ZSK1</accession>
<accession>A9QW72</accession>
<accession>B7ZSK2</accession>